<reference key="1">
    <citation type="journal article" date="2009" name="J. Bacteriol.">
        <title>Complete genome sequence of the anaerobic, protein-degrading hyperthermophilic crenarchaeon Desulfurococcus kamchatkensis.</title>
        <authorList>
            <person name="Ravin N.V."/>
            <person name="Mardanov A.V."/>
            <person name="Beletsky A.V."/>
            <person name="Kublanov I.V."/>
            <person name="Kolganova T.V."/>
            <person name="Lebedinsky A.V."/>
            <person name="Chernyh N.A."/>
            <person name="Bonch-Osmolovskaya E.A."/>
            <person name="Skryabin K.G."/>
        </authorList>
    </citation>
    <scope>NUCLEOTIDE SEQUENCE [LARGE SCALE GENOMIC DNA]</scope>
    <source>
        <strain>DSM 18924 / JCM 16383 / VKM B-2413 / 1221n</strain>
    </source>
</reference>
<accession>B8D355</accession>
<name>Y139_DESA1</name>
<dbReference type="EMBL" id="CP001140">
    <property type="protein sequence ID" value="ACL10468.1"/>
    <property type="molecule type" value="Genomic_DNA"/>
</dbReference>
<dbReference type="RefSeq" id="WP_012607810.1">
    <property type="nucleotide sequence ID" value="NC_011766.1"/>
</dbReference>
<dbReference type="SMR" id="B8D355"/>
<dbReference type="STRING" id="490899.DKAM_0139"/>
<dbReference type="GeneID" id="7170452"/>
<dbReference type="KEGG" id="dka:DKAM_0139"/>
<dbReference type="eggNOG" id="arCOG04308">
    <property type="taxonomic scope" value="Archaea"/>
</dbReference>
<dbReference type="HOGENOM" id="CLU_165882_1_0_2"/>
<dbReference type="Proteomes" id="UP000006903">
    <property type="component" value="Chromosome"/>
</dbReference>
<dbReference type="Gene3D" id="1.20.1440.50">
    <property type="entry name" value="Ta0600-like"/>
    <property type="match status" value="1"/>
</dbReference>
<dbReference type="HAMAP" id="MF_00342">
    <property type="entry name" value="UPF0147"/>
    <property type="match status" value="1"/>
</dbReference>
<dbReference type="InterPro" id="IPR023130">
    <property type="entry name" value="Ta0600-like_sf"/>
</dbReference>
<dbReference type="InterPro" id="IPR005354">
    <property type="entry name" value="UPF0147"/>
</dbReference>
<dbReference type="NCBIfam" id="NF003319">
    <property type="entry name" value="PRK04330.1"/>
    <property type="match status" value="1"/>
</dbReference>
<dbReference type="Pfam" id="PF03685">
    <property type="entry name" value="UPF0147"/>
    <property type="match status" value="1"/>
</dbReference>
<dbReference type="SUPFAM" id="SSF158436">
    <property type="entry name" value="Ta0600-like"/>
    <property type="match status" value="1"/>
</dbReference>
<gene>
    <name type="ordered locus">DKAM_0139</name>
</gene>
<sequence>MELSRVLDNEVKLRNAIYLLMSIVNDTAVPRNIRRAATEALNYLRDERYTPGVRAANAVGVLDQVSQDPNMPLSARTKVWQVIAILETIHD</sequence>
<proteinExistence type="inferred from homology"/>
<feature type="chain" id="PRO_1000197687" description="UPF0147 protein DKAM_0139">
    <location>
        <begin position="1"/>
        <end position="91"/>
    </location>
</feature>
<protein>
    <recommendedName>
        <fullName evidence="1">UPF0147 protein DKAM_0139</fullName>
    </recommendedName>
</protein>
<evidence type="ECO:0000255" key="1">
    <source>
        <dbReference type="HAMAP-Rule" id="MF_00342"/>
    </source>
</evidence>
<comment type="similarity">
    <text evidence="1">Belongs to the UPF0147 family.</text>
</comment>
<organism>
    <name type="scientific">Desulfurococcus amylolyticus (strain DSM 18924 / JCM 16383 / VKM B-2413 / 1221n)</name>
    <name type="common">Desulfurococcus kamchatkensis</name>
    <dbReference type="NCBI Taxonomy" id="490899"/>
    <lineage>
        <taxon>Archaea</taxon>
        <taxon>Thermoproteota</taxon>
        <taxon>Thermoprotei</taxon>
        <taxon>Desulfurococcales</taxon>
        <taxon>Desulfurococcaceae</taxon>
        <taxon>Desulfurococcus</taxon>
    </lineage>
</organism>